<feature type="chain" id="PRO_1000021511" description="Hydroxyethylthiazole kinase">
    <location>
        <begin position="1"/>
        <end position="262"/>
    </location>
</feature>
<feature type="binding site" evidence="1">
    <location>
        <position position="50"/>
    </location>
    <ligand>
        <name>substrate</name>
    </ligand>
</feature>
<feature type="binding site" evidence="1">
    <location>
        <position position="125"/>
    </location>
    <ligand>
        <name>ATP</name>
        <dbReference type="ChEBI" id="CHEBI:30616"/>
    </ligand>
</feature>
<feature type="binding site" evidence="1">
    <location>
        <position position="171"/>
    </location>
    <ligand>
        <name>ATP</name>
        <dbReference type="ChEBI" id="CHEBI:30616"/>
    </ligand>
</feature>
<feature type="binding site" evidence="1">
    <location>
        <position position="198"/>
    </location>
    <ligand>
        <name>substrate</name>
    </ligand>
</feature>
<keyword id="KW-0067">ATP-binding</keyword>
<keyword id="KW-0418">Kinase</keyword>
<keyword id="KW-0460">Magnesium</keyword>
<keyword id="KW-0479">Metal-binding</keyword>
<keyword id="KW-0547">Nucleotide-binding</keyword>
<keyword id="KW-0784">Thiamine biosynthesis</keyword>
<keyword id="KW-0808">Transferase</keyword>
<evidence type="ECO:0000255" key="1">
    <source>
        <dbReference type="HAMAP-Rule" id="MF_00228"/>
    </source>
</evidence>
<reference key="1">
    <citation type="journal article" date="2006" name="Proc. Natl. Acad. Sci. U.S.A.">
        <title>Identification of genes subject to positive selection in uropathogenic strains of Escherichia coli: a comparative genomics approach.</title>
        <authorList>
            <person name="Chen S.L."/>
            <person name="Hung C.-S."/>
            <person name="Xu J."/>
            <person name="Reigstad C.S."/>
            <person name="Magrini V."/>
            <person name="Sabo A."/>
            <person name="Blasiar D."/>
            <person name="Bieri T."/>
            <person name="Meyer R.R."/>
            <person name="Ozersky P."/>
            <person name="Armstrong J.R."/>
            <person name="Fulton R.S."/>
            <person name="Latreille J.P."/>
            <person name="Spieth J."/>
            <person name="Hooton T.M."/>
            <person name="Mardis E.R."/>
            <person name="Hultgren S.J."/>
            <person name="Gordon J.I."/>
        </authorList>
    </citation>
    <scope>NUCLEOTIDE SEQUENCE [LARGE SCALE GENOMIC DNA]</scope>
    <source>
        <strain>UTI89 / UPEC</strain>
    </source>
</reference>
<organism>
    <name type="scientific">Escherichia coli (strain UTI89 / UPEC)</name>
    <dbReference type="NCBI Taxonomy" id="364106"/>
    <lineage>
        <taxon>Bacteria</taxon>
        <taxon>Pseudomonadati</taxon>
        <taxon>Pseudomonadota</taxon>
        <taxon>Gammaproteobacteria</taxon>
        <taxon>Enterobacterales</taxon>
        <taxon>Enterobacteriaceae</taxon>
        <taxon>Escherichia</taxon>
    </lineage>
</organism>
<proteinExistence type="inferred from homology"/>
<comment type="function">
    <text evidence="1">Catalyzes the phosphorylation of the hydroxyl group of 4-methyl-5-beta-hydroxyethylthiazole (THZ).</text>
</comment>
<comment type="catalytic activity">
    <reaction evidence="1">
        <text>5-(2-hydroxyethyl)-4-methylthiazole + ATP = 4-methyl-5-(2-phosphooxyethyl)-thiazole + ADP + H(+)</text>
        <dbReference type="Rhea" id="RHEA:24212"/>
        <dbReference type="ChEBI" id="CHEBI:15378"/>
        <dbReference type="ChEBI" id="CHEBI:17957"/>
        <dbReference type="ChEBI" id="CHEBI:30616"/>
        <dbReference type="ChEBI" id="CHEBI:58296"/>
        <dbReference type="ChEBI" id="CHEBI:456216"/>
        <dbReference type="EC" id="2.7.1.50"/>
    </reaction>
</comment>
<comment type="cofactor">
    <cofactor evidence="1">
        <name>Mg(2+)</name>
        <dbReference type="ChEBI" id="CHEBI:18420"/>
    </cofactor>
</comment>
<comment type="pathway">
    <text evidence="1">Cofactor biosynthesis; thiamine diphosphate biosynthesis; 4-methyl-5-(2-phosphoethyl)-thiazole from 5-(2-hydroxyethyl)-4-methylthiazole: step 1/1.</text>
</comment>
<comment type="similarity">
    <text evidence="1">Belongs to the Thz kinase family.</text>
</comment>
<gene>
    <name evidence="1" type="primary">thiM</name>
    <name type="ordered locus">UTI89_C2378</name>
</gene>
<dbReference type="EC" id="2.7.1.50" evidence="1"/>
<dbReference type="EMBL" id="CP000243">
    <property type="protein sequence ID" value="ABE07846.1"/>
    <property type="molecule type" value="Genomic_DNA"/>
</dbReference>
<dbReference type="RefSeq" id="WP_001195614.1">
    <property type="nucleotide sequence ID" value="NZ_CP064825.1"/>
</dbReference>
<dbReference type="SMR" id="Q1R9W8"/>
<dbReference type="KEGG" id="eci:UTI89_C2378"/>
<dbReference type="HOGENOM" id="CLU_019943_0_1_6"/>
<dbReference type="UniPathway" id="UPA00060">
    <property type="reaction ID" value="UER00139"/>
</dbReference>
<dbReference type="Proteomes" id="UP000001952">
    <property type="component" value="Chromosome"/>
</dbReference>
<dbReference type="GO" id="GO:0005524">
    <property type="term" value="F:ATP binding"/>
    <property type="evidence" value="ECO:0007669"/>
    <property type="project" value="UniProtKB-UniRule"/>
</dbReference>
<dbReference type="GO" id="GO:0004417">
    <property type="term" value="F:hydroxyethylthiazole kinase activity"/>
    <property type="evidence" value="ECO:0007669"/>
    <property type="project" value="UniProtKB-UniRule"/>
</dbReference>
<dbReference type="GO" id="GO:0000287">
    <property type="term" value="F:magnesium ion binding"/>
    <property type="evidence" value="ECO:0007669"/>
    <property type="project" value="UniProtKB-UniRule"/>
</dbReference>
<dbReference type="GO" id="GO:0009228">
    <property type="term" value="P:thiamine biosynthetic process"/>
    <property type="evidence" value="ECO:0007669"/>
    <property type="project" value="UniProtKB-KW"/>
</dbReference>
<dbReference type="GO" id="GO:0009229">
    <property type="term" value="P:thiamine diphosphate biosynthetic process"/>
    <property type="evidence" value="ECO:0007669"/>
    <property type="project" value="UniProtKB-UniRule"/>
</dbReference>
<dbReference type="CDD" id="cd01170">
    <property type="entry name" value="THZ_kinase"/>
    <property type="match status" value="1"/>
</dbReference>
<dbReference type="FunFam" id="3.40.1190.20:FF:000015">
    <property type="entry name" value="Hydroxyethylthiazole kinase"/>
    <property type="match status" value="1"/>
</dbReference>
<dbReference type="Gene3D" id="3.40.1190.20">
    <property type="match status" value="1"/>
</dbReference>
<dbReference type="HAMAP" id="MF_00228">
    <property type="entry name" value="Thz_kinase"/>
    <property type="match status" value="1"/>
</dbReference>
<dbReference type="InterPro" id="IPR000417">
    <property type="entry name" value="Hyethyz_kinase"/>
</dbReference>
<dbReference type="InterPro" id="IPR029056">
    <property type="entry name" value="Ribokinase-like"/>
</dbReference>
<dbReference type="NCBIfam" id="NF006830">
    <property type="entry name" value="PRK09355.1"/>
    <property type="match status" value="1"/>
</dbReference>
<dbReference type="NCBIfam" id="TIGR00694">
    <property type="entry name" value="thiM"/>
    <property type="match status" value="1"/>
</dbReference>
<dbReference type="Pfam" id="PF02110">
    <property type="entry name" value="HK"/>
    <property type="match status" value="1"/>
</dbReference>
<dbReference type="PIRSF" id="PIRSF000513">
    <property type="entry name" value="Thz_kinase"/>
    <property type="match status" value="1"/>
</dbReference>
<dbReference type="PRINTS" id="PR01099">
    <property type="entry name" value="HYETHTZKNASE"/>
</dbReference>
<dbReference type="SUPFAM" id="SSF53613">
    <property type="entry name" value="Ribokinase-like"/>
    <property type="match status" value="1"/>
</dbReference>
<name>THIM_ECOUT</name>
<sequence>MQVDLLSSAQSAHALHLFHQHSPLVHCMTNDVVQTFTANTLLALGASPAMVIETEEASQFAAIASALLINVGTLTQPRAQAMSAAVEQATRSQTPWTLDPVAVGALDYRRRFCVELLSHKPTAIRGNASEIMALAGVANGGRGVDTTDAAANAIPAAQTLARETGAIVVVTGEVDYVTDGHRIIGIHGGDPLMTKVVGTGCALSAVVAACCALPGDTLENIASACHWMKQAGERAVARSEGPGSFVPHFLDALWQLTQEVQA</sequence>
<accession>Q1R9W8</accession>
<protein>
    <recommendedName>
        <fullName evidence="1">Hydroxyethylthiazole kinase</fullName>
        <ecNumber evidence="1">2.7.1.50</ecNumber>
    </recommendedName>
    <alternativeName>
        <fullName evidence="1">4-methyl-5-beta-hydroxyethylthiazole kinase</fullName>
        <shortName evidence="1">TH kinase</shortName>
        <shortName evidence="1">Thz kinase</shortName>
    </alternativeName>
</protein>